<comment type="function">
    <text evidence="1">Matrix metalloproteinases degrade protein components of the extracellular matrix such as fibronectin, laminin, gelatins and/or collagens.</text>
</comment>
<comment type="cofactor">
    <cofactor evidence="1">
        <name>Ca(2+)</name>
        <dbReference type="ChEBI" id="CHEBI:29108"/>
    </cofactor>
    <text evidence="1">Binds 4 Ca(2+) ions per subunit.</text>
</comment>
<comment type="cofactor">
    <cofactor evidence="1">
        <name>Zn(2+)</name>
        <dbReference type="ChEBI" id="CHEBI:29105"/>
    </cofactor>
    <text evidence="1">Binds 2 Zn(2+) ions per subunit.</text>
</comment>
<comment type="subcellular location">
    <subcellularLocation>
        <location evidence="2">Endoplasmic reticulum</location>
    </subcellularLocation>
    <text evidence="2">Retained in the endoplasmic reticulum due to a C-terminal extension (CTE).</text>
</comment>
<comment type="domain">
    <text>The conserved cysteine present in the cysteine-switch motif binds the catalytic zinc ion, thus inhibiting the enzyme. The dissociation of the cysteine from the zinc ion upon the activation-peptide release activates the enzyme.</text>
</comment>
<comment type="PTM">
    <text evidence="2">N-glycosylated.</text>
</comment>
<comment type="similarity">
    <text evidence="5">Belongs to the peptidase M10A family.</text>
</comment>
<reference key="1">
    <citation type="submission" date="2000-06" db="EMBL/GenBank/DDBJ databases">
        <title>Molecular cloning of a novel matrix metalloproteinase (MMP-27) from sclera.</title>
        <authorList>
            <person name="Guggenheim J.A."/>
            <person name="To C.H."/>
            <person name="Frost M.R."/>
        </authorList>
    </citation>
    <scope>NUCLEOTIDE SEQUENCE [MRNA]</scope>
    <source>
        <tissue>Sclera</tissue>
    </source>
</reference>
<feature type="signal peptide" evidence="3">
    <location>
        <begin position="1"/>
        <end position="17"/>
    </location>
</feature>
<feature type="propeptide" id="PRO_0000287563" description="Activation peptide" evidence="1">
    <location>
        <begin position="18"/>
        <end position="98"/>
    </location>
</feature>
<feature type="chain" id="PRO_0000287564" description="Matrix metalloproteinase-27" evidence="1">
    <location>
        <begin position="99"/>
        <end position="512"/>
    </location>
</feature>
<feature type="repeat" description="Hemopexin 1">
    <location>
        <begin position="276"/>
        <end position="325"/>
    </location>
</feature>
<feature type="repeat" description="Hemopexin 2">
    <location>
        <begin position="326"/>
        <end position="371"/>
    </location>
</feature>
<feature type="repeat" description="Hemopexin 3">
    <location>
        <begin position="373"/>
        <end position="421"/>
    </location>
</feature>
<feature type="repeat" description="Hemopexin 4">
    <location>
        <begin position="422"/>
        <end position="465"/>
    </location>
</feature>
<feature type="region of interest" description="Required for retention in the endoplasmic reticulum" evidence="2">
    <location>
        <begin position="466"/>
        <end position="512"/>
    </location>
</feature>
<feature type="short sequence motif" description="Cysteine switch" evidence="1">
    <location>
        <begin position="89"/>
        <end position="96"/>
    </location>
</feature>
<feature type="active site" evidence="4">
    <location>
        <position position="217"/>
    </location>
</feature>
<feature type="binding site" description="in inhibited form" evidence="1">
    <location>
        <position position="91"/>
    </location>
    <ligand>
        <name>Zn(2+)</name>
        <dbReference type="ChEBI" id="CHEBI:29105"/>
        <label>2</label>
        <note>catalytic</note>
    </ligand>
</feature>
<feature type="binding site" evidence="1">
    <location>
        <position position="121"/>
    </location>
    <ligand>
        <name>Ca(2+)</name>
        <dbReference type="ChEBI" id="CHEBI:29108"/>
        <label>1</label>
    </ligand>
</feature>
<feature type="binding site" evidence="1">
    <location>
        <position position="155"/>
    </location>
    <ligand>
        <name>Ca(2+)</name>
        <dbReference type="ChEBI" id="CHEBI:29108"/>
        <label>2</label>
    </ligand>
</feature>
<feature type="binding site" evidence="1">
    <location>
        <position position="165"/>
    </location>
    <ligand>
        <name>Zn(2+)</name>
        <dbReference type="ChEBI" id="CHEBI:29105"/>
        <label>1</label>
    </ligand>
</feature>
<feature type="binding site" evidence="1">
    <location>
        <position position="173"/>
    </location>
    <ligand>
        <name>Ca(2+)</name>
        <dbReference type="ChEBI" id="CHEBI:29108"/>
        <label>3</label>
    </ligand>
</feature>
<feature type="binding site" evidence="1">
    <location>
        <position position="174"/>
    </location>
    <ligand>
        <name>Ca(2+)</name>
        <dbReference type="ChEBI" id="CHEBI:29108"/>
        <label>3</label>
    </ligand>
</feature>
<feature type="binding site" evidence="1">
    <location>
        <position position="178"/>
    </location>
    <ligand>
        <name>Ca(2+)</name>
        <dbReference type="ChEBI" id="CHEBI:29108"/>
        <label>3</label>
    </ligand>
</feature>
<feature type="binding site" evidence="1">
    <location>
        <position position="181"/>
    </location>
    <ligand>
        <name>Zn(2+)</name>
        <dbReference type="ChEBI" id="CHEBI:29105"/>
        <label>1</label>
    </ligand>
</feature>
<feature type="binding site" evidence="1">
    <location>
        <position position="188"/>
    </location>
    <ligand>
        <name>Ca(2+)</name>
        <dbReference type="ChEBI" id="CHEBI:29108"/>
        <label>2</label>
    </ligand>
</feature>
<feature type="binding site" evidence="1">
    <location>
        <position position="192"/>
    </location>
    <ligand>
        <name>Ca(2+)</name>
        <dbReference type="ChEBI" id="CHEBI:29108"/>
        <label>2</label>
    </ligand>
</feature>
<feature type="binding site" evidence="1">
    <location>
        <position position="194"/>
    </location>
    <ligand>
        <name>Zn(2+)</name>
        <dbReference type="ChEBI" id="CHEBI:29105"/>
        <label>1</label>
    </ligand>
</feature>
<feature type="binding site" evidence="1">
    <location>
        <position position="196"/>
    </location>
    <ligand>
        <name>Ca(2+)</name>
        <dbReference type="ChEBI" id="CHEBI:29108"/>
        <label>3</label>
    </ligand>
</feature>
<feature type="binding site" evidence="1">
    <location>
        <position position="199"/>
    </location>
    <ligand>
        <name>Ca(2+)</name>
        <dbReference type="ChEBI" id="CHEBI:29108"/>
        <label>1</label>
    </ligand>
</feature>
<feature type="binding site" evidence="1">
    <location>
        <position position="199"/>
    </location>
    <ligand>
        <name>Ca(2+)</name>
        <dbReference type="ChEBI" id="CHEBI:29108"/>
        <label>3</label>
    </ligand>
</feature>
<feature type="binding site" evidence="1">
    <location>
        <position position="216"/>
    </location>
    <ligand>
        <name>Zn(2+)</name>
        <dbReference type="ChEBI" id="CHEBI:29105"/>
        <label>2</label>
        <note>catalytic</note>
    </ligand>
</feature>
<feature type="binding site" evidence="1">
    <location>
        <position position="220"/>
    </location>
    <ligand>
        <name>Zn(2+)</name>
        <dbReference type="ChEBI" id="CHEBI:29105"/>
        <label>2</label>
        <note>catalytic</note>
    </ligand>
</feature>
<feature type="binding site" evidence="1">
    <location>
        <position position="226"/>
    </location>
    <ligand>
        <name>Zn(2+)</name>
        <dbReference type="ChEBI" id="CHEBI:29105"/>
        <label>2</label>
        <note>catalytic</note>
    </ligand>
</feature>
<feature type="binding site" evidence="1">
    <location>
        <position position="286"/>
    </location>
    <ligand>
        <name>Ca(2+)</name>
        <dbReference type="ChEBI" id="CHEBI:29108"/>
        <label>4</label>
    </ligand>
</feature>
<feature type="binding site" evidence="1">
    <location>
        <position position="377"/>
    </location>
    <ligand>
        <name>Ca(2+)</name>
        <dbReference type="ChEBI" id="CHEBI:29108"/>
        <label>4</label>
    </ligand>
</feature>
<feature type="binding site" evidence="1">
    <location>
        <position position="426"/>
    </location>
    <ligand>
        <name>Ca(2+)</name>
        <dbReference type="ChEBI" id="CHEBI:29108"/>
        <label>4</label>
    </ligand>
</feature>
<feature type="glycosylation site" description="N-linked (GlcNAc...) asparagine" evidence="3">
    <location>
        <position position="110"/>
    </location>
</feature>
<feature type="disulfide bond" evidence="1">
    <location>
        <begin position="279"/>
        <end position="465"/>
    </location>
</feature>
<organism>
    <name type="scientific">Tupaia belangeri</name>
    <name type="common">Common tree shrew</name>
    <name type="synonym">Tupaia glis belangeri</name>
    <dbReference type="NCBI Taxonomy" id="37347"/>
    <lineage>
        <taxon>Eukaryota</taxon>
        <taxon>Metazoa</taxon>
        <taxon>Chordata</taxon>
        <taxon>Craniata</taxon>
        <taxon>Vertebrata</taxon>
        <taxon>Euteleostomi</taxon>
        <taxon>Mammalia</taxon>
        <taxon>Eutheria</taxon>
        <taxon>Euarchontoglires</taxon>
        <taxon>Scandentia</taxon>
        <taxon>Tupaiidae</taxon>
        <taxon>Tupaia</taxon>
    </lineage>
</organism>
<keyword id="KW-0106">Calcium</keyword>
<keyword id="KW-0177">Collagen degradation</keyword>
<keyword id="KW-1015">Disulfide bond</keyword>
<keyword id="KW-0256">Endoplasmic reticulum</keyword>
<keyword id="KW-0325">Glycoprotein</keyword>
<keyword id="KW-0378">Hydrolase</keyword>
<keyword id="KW-0479">Metal-binding</keyword>
<keyword id="KW-0482">Metalloprotease</keyword>
<keyword id="KW-0645">Protease</keyword>
<keyword id="KW-0677">Repeat</keyword>
<keyword id="KW-0732">Signal</keyword>
<keyword id="KW-0862">Zinc</keyword>
<keyword id="KW-0865">Zymogen</keyword>
<protein>
    <recommendedName>
        <fullName>Matrix metalloproteinase-27</fullName>
        <shortName>MMP-27</shortName>
        <ecNumber>3.4.24.-</ecNumber>
    </recommendedName>
</protein>
<gene>
    <name type="primary">MMP27</name>
</gene>
<accession>Q9GKE1</accession>
<proteinExistence type="evidence at transcript level"/>
<evidence type="ECO:0000250" key="1"/>
<evidence type="ECO:0000250" key="2">
    <source>
        <dbReference type="UniProtKB" id="Q9H306"/>
    </source>
</evidence>
<evidence type="ECO:0000255" key="3"/>
<evidence type="ECO:0000255" key="4">
    <source>
        <dbReference type="PROSITE-ProRule" id="PRU10095"/>
    </source>
</evidence>
<evidence type="ECO:0000305" key="5"/>
<dbReference type="EC" id="3.4.24.-"/>
<dbReference type="EMBL" id="AF281673">
    <property type="protein sequence ID" value="AAG44844.1"/>
    <property type="molecule type" value="mRNA"/>
</dbReference>
<dbReference type="SMR" id="Q9GKE1"/>
<dbReference type="MEROPS" id="M10.027"/>
<dbReference type="GlyCosmos" id="Q9GKE1">
    <property type="glycosylation" value="1 site, No reported glycans"/>
</dbReference>
<dbReference type="GO" id="GO:0005783">
    <property type="term" value="C:endoplasmic reticulum"/>
    <property type="evidence" value="ECO:0000250"/>
    <property type="project" value="UniProtKB"/>
</dbReference>
<dbReference type="GO" id="GO:0031012">
    <property type="term" value="C:extracellular matrix"/>
    <property type="evidence" value="ECO:0007669"/>
    <property type="project" value="InterPro"/>
</dbReference>
<dbReference type="GO" id="GO:0004222">
    <property type="term" value="F:metalloendopeptidase activity"/>
    <property type="evidence" value="ECO:0007669"/>
    <property type="project" value="InterPro"/>
</dbReference>
<dbReference type="GO" id="GO:0008270">
    <property type="term" value="F:zinc ion binding"/>
    <property type="evidence" value="ECO:0007669"/>
    <property type="project" value="InterPro"/>
</dbReference>
<dbReference type="GO" id="GO:0030574">
    <property type="term" value="P:collagen catabolic process"/>
    <property type="evidence" value="ECO:0007669"/>
    <property type="project" value="UniProtKB-KW"/>
</dbReference>
<dbReference type="GO" id="GO:0030198">
    <property type="term" value="P:extracellular matrix organization"/>
    <property type="evidence" value="ECO:0007669"/>
    <property type="project" value="TreeGrafter"/>
</dbReference>
<dbReference type="GO" id="GO:0006508">
    <property type="term" value="P:proteolysis"/>
    <property type="evidence" value="ECO:0007669"/>
    <property type="project" value="UniProtKB-KW"/>
</dbReference>
<dbReference type="CDD" id="cd00094">
    <property type="entry name" value="HX"/>
    <property type="match status" value="1"/>
</dbReference>
<dbReference type="CDD" id="cd04278">
    <property type="entry name" value="ZnMc_MMP"/>
    <property type="match status" value="1"/>
</dbReference>
<dbReference type="FunFam" id="3.40.390.10:FF:000035">
    <property type="entry name" value="Matrix metallopeptidase 27"/>
    <property type="match status" value="1"/>
</dbReference>
<dbReference type="FunFam" id="2.110.10.10:FF:000002">
    <property type="entry name" value="Matrix metallopeptidase 3"/>
    <property type="match status" value="1"/>
</dbReference>
<dbReference type="Gene3D" id="3.40.390.10">
    <property type="entry name" value="Collagenase (Catalytic Domain)"/>
    <property type="match status" value="1"/>
</dbReference>
<dbReference type="Gene3D" id="2.110.10.10">
    <property type="entry name" value="Hemopexin-like domain"/>
    <property type="match status" value="1"/>
</dbReference>
<dbReference type="InterPro" id="IPR000585">
    <property type="entry name" value="Hemopexin-like_dom"/>
</dbReference>
<dbReference type="InterPro" id="IPR036375">
    <property type="entry name" value="Hemopexin-like_dom_sf"/>
</dbReference>
<dbReference type="InterPro" id="IPR018487">
    <property type="entry name" value="Hemopexin-like_repeat"/>
</dbReference>
<dbReference type="InterPro" id="IPR018486">
    <property type="entry name" value="Hemopexin_CS"/>
</dbReference>
<dbReference type="InterPro" id="IPR033739">
    <property type="entry name" value="M10A_MMP"/>
</dbReference>
<dbReference type="InterPro" id="IPR024079">
    <property type="entry name" value="MetalloPept_cat_dom_sf"/>
</dbReference>
<dbReference type="InterPro" id="IPR001818">
    <property type="entry name" value="Pept_M10_metallopeptidase"/>
</dbReference>
<dbReference type="InterPro" id="IPR021190">
    <property type="entry name" value="Pept_M10A"/>
</dbReference>
<dbReference type="InterPro" id="IPR021158">
    <property type="entry name" value="Pept_M10A_Zn_BS"/>
</dbReference>
<dbReference type="InterPro" id="IPR006026">
    <property type="entry name" value="Peptidase_Metallo"/>
</dbReference>
<dbReference type="InterPro" id="IPR002477">
    <property type="entry name" value="Peptidoglycan-bd-like"/>
</dbReference>
<dbReference type="InterPro" id="IPR036365">
    <property type="entry name" value="PGBD-like_sf"/>
</dbReference>
<dbReference type="PANTHER" id="PTHR10201">
    <property type="entry name" value="MATRIX METALLOPROTEINASE"/>
    <property type="match status" value="1"/>
</dbReference>
<dbReference type="PANTHER" id="PTHR10201:SF115">
    <property type="entry name" value="MATRIX METALLOPROTEINASE-27"/>
    <property type="match status" value="1"/>
</dbReference>
<dbReference type="Pfam" id="PF00045">
    <property type="entry name" value="Hemopexin"/>
    <property type="match status" value="4"/>
</dbReference>
<dbReference type="Pfam" id="PF00413">
    <property type="entry name" value="Peptidase_M10"/>
    <property type="match status" value="1"/>
</dbReference>
<dbReference type="Pfam" id="PF01471">
    <property type="entry name" value="PG_binding_1"/>
    <property type="match status" value="1"/>
</dbReference>
<dbReference type="PIRSF" id="PIRSF001191">
    <property type="entry name" value="Peptidase_M10A_matrix"/>
    <property type="match status" value="1"/>
</dbReference>
<dbReference type="PRINTS" id="PR00138">
    <property type="entry name" value="MATRIXIN"/>
</dbReference>
<dbReference type="SMART" id="SM00120">
    <property type="entry name" value="HX"/>
    <property type="match status" value="4"/>
</dbReference>
<dbReference type="SMART" id="SM00235">
    <property type="entry name" value="ZnMc"/>
    <property type="match status" value="1"/>
</dbReference>
<dbReference type="SUPFAM" id="SSF50923">
    <property type="entry name" value="Hemopexin-like domain"/>
    <property type="match status" value="1"/>
</dbReference>
<dbReference type="SUPFAM" id="SSF55486">
    <property type="entry name" value="Metalloproteases ('zincins'), catalytic domain"/>
    <property type="match status" value="1"/>
</dbReference>
<dbReference type="SUPFAM" id="SSF47090">
    <property type="entry name" value="PGBD-like"/>
    <property type="match status" value="1"/>
</dbReference>
<dbReference type="PROSITE" id="PS00546">
    <property type="entry name" value="CYSTEINE_SWITCH"/>
    <property type="match status" value="1"/>
</dbReference>
<dbReference type="PROSITE" id="PS00024">
    <property type="entry name" value="HEMOPEXIN"/>
    <property type="match status" value="1"/>
</dbReference>
<dbReference type="PROSITE" id="PS51642">
    <property type="entry name" value="HEMOPEXIN_2"/>
    <property type="match status" value="4"/>
</dbReference>
<dbReference type="PROSITE" id="PS00142">
    <property type="entry name" value="ZINC_PROTEASE"/>
    <property type="match status" value="1"/>
</dbReference>
<sequence length="512" mass="58816">MKSFLLLFLLFVTFSSALPADQKMENEENMQLAQAYLNQFYSLEIEGSHLVQSKNGSLLDGKIREMQAFFGLTVTGTLDSNTLEIMKTPRCGVPDVGQYGYTLPGWRKYNLTYRIMNYTPDMARADVDEAIQKALEVWSKVTPLTFTKIFKGIADIMIAFRTRVHGRCPRYFDGPLGVLGHAFPPGLGLGGDTHFDEDENWTKDTAGFSLFLVAAHEFGHALGLSHSNDQTALMFPNYVSLDPSKYPLSQDDIDGIQSIYGGLPTTPSKPKGPKIPHACDPDLTFDAITNIRREVMFFKGRHLWRIYHDITDVEFELIASFWPSLPADLQAAYENPRDKILVFKDENFWMIGAYNVLPRYPRSIHILGFPRYVKKIDAAVCDQDTRKTYFFVGIWCWRYDEMTRTMDRGYPQRIVRHFPGIGLRVDAAFQHKGFFYFFRGSKQFEYDIKAKSITRIMRTNTWFQCKEPLNSSLDFHFNQEKAYSGEVETLHHQSLSLLIFGIVHLLNKICSY</sequence>
<name>MMP27_TUPBE</name>